<name>RMLC_SINFN</name>
<reference key="1">
    <citation type="journal article" date="1997" name="Nature">
        <title>Molecular basis of symbiosis between Rhizobium and legumes.</title>
        <authorList>
            <person name="Freiberg C.A."/>
            <person name="Fellay R."/>
            <person name="Bairoch A."/>
            <person name="Broughton W.J."/>
            <person name="Rosenthal A."/>
            <person name="Perret X."/>
        </authorList>
    </citation>
    <scope>NUCLEOTIDE SEQUENCE [LARGE SCALE GENOMIC DNA]</scope>
    <source>
        <strain>NBRC 101917 / NGR234</strain>
    </source>
</reference>
<reference key="2">
    <citation type="journal article" date="2009" name="Appl. Environ. Microbiol.">
        <title>Rhizobium sp. strain NGR234 possesses a remarkable number of secretion systems.</title>
        <authorList>
            <person name="Schmeisser C."/>
            <person name="Liesegang H."/>
            <person name="Krysciak D."/>
            <person name="Bakkou N."/>
            <person name="Le Quere A."/>
            <person name="Wollherr A."/>
            <person name="Heinemeyer I."/>
            <person name="Morgenstern B."/>
            <person name="Pommerening-Roeser A."/>
            <person name="Flores M."/>
            <person name="Palacios R."/>
            <person name="Brenner S."/>
            <person name="Gottschalk G."/>
            <person name="Schmitz R.A."/>
            <person name="Broughton W.J."/>
            <person name="Perret X."/>
            <person name="Strittmatter A.W."/>
            <person name="Streit W.R."/>
        </authorList>
    </citation>
    <scope>NUCLEOTIDE SEQUENCE [LARGE SCALE GENOMIC DNA]</scope>
    <source>
        <strain>NBRC 101917 / NGR234</strain>
    </source>
</reference>
<evidence type="ECO:0000250" key="1">
    <source>
        <dbReference type="UniProtKB" id="P26394"/>
    </source>
</evidence>
<evidence type="ECO:0000250" key="2">
    <source>
        <dbReference type="UniProtKB" id="Q5SFD1"/>
    </source>
</evidence>
<evidence type="ECO:0000250" key="3">
    <source>
        <dbReference type="UniProtKB" id="Q9HU21"/>
    </source>
</evidence>
<evidence type="ECO:0000305" key="4"/>
<organism>
    <name type="scientific">Sinorhizobium fredii (strain NBRC 101917 / NGR234)</name>
    <dbReference type="NCBI Taxonomy" id="394"/>
    <lineage>
        <taxon>Bacteria</taxon>
        <taxon>Pseudomonadati</taxon>
        <taxon>Pseudomonadota</taxon>
        <taxon>Alphaproteobacteria</taxon>
        <taxon>Hyphomicrobiales</taxon>
        <taxon>Rhizobiaceae</taxon>
        <taxon>Sinorhizobium/Ensifer group</taxon>
        <taxon>Sinorhizobium</taxon>
    </lineage>
</organism>
<comment type="function">
    <text evidence="1">Catalyzes the epimerization of the C3' and C5'positions of dTDP-6-deoxy-D-xylo-4-hexulose, forming dTDP-6-deoxy-L-lyxo-4-hexulose.</text>
</comment>
<comment type="catalytic activity">
    <reaction evidence="1">
        <text>dTDP-4-dehydro-6-deoxy-alpha-D-glucose = dTDP-4-dehydro-beta-L-rhamnose</text>
        <dbReference type="Rhea" id="RHEA:16969"/>
        <dbReference type="ChEBI" id="CHEBI:57649"/>
        <dbReference type="ChEBI" id="CHEBI:62830"/>
        <dbReference type="EC" id="5.1.3.13"/>
    </reaction>
</comment>
<comment type="pathway">
    <text evidence="1">Carbohydrate biosynthesis; dTDP-L-rhamnose biosynthesis.</text>
</comment>
<comment type="subunit">
    <text evidence="1">Homodimer.</text>
</comment>
<comment type="similarity">
    <text evidence="4">Belongs to the dTDP-4-dehydrorhamnose 3,5-epimerase family.</text>
</comment>
<dbReference type="EC" id="5.1.3.13" evidence="1"/>
<dbReference type="EMBL" id="U00090">
    <property type="protein sequence ID" value="AAB91686.1"/>
    <property type="molecule type" value="Genomic_DNA"/>
</dbReference>
<dbReference type="RefSeq" id="NP_443874.1">
    <property type="nucleotide sequence ID" value="NC_000914.2"/>
</dbReference>
<dbReference type="SMR" id="P55468"/>
<dbReference type="KEGG" id="rhi:NGR_a03520"/>
<dbReference type="PATRIC" id="fig|394.7.peg.360"/>
<dbReference type="eggNOG" id="COG1898">
    <property type="taxonomic scope" value="Bacteria"/>
</dbReference>
<dbReference type="HOGENOM" id="CLU_090940_1_1_5"/>
<dbReference type="OrthoDB" id="9800680at2"/>
<dbReference type="UniPathway" id="UPA00124"/>
<dbReference type="Proteomes" id="UP000001054">
    <property type="component" value="Plasmid pNGR234a"/>
</dbReference>
<dbReference type="GO" id="GO:0005829">
    <property type="term" value="C:cytosol"/>
    <property type="evidence" value="ECO:0007669"/>
    <property type="project" value="TreeGrafter"/>
</dbReference>
<dbReference type="GO" id="GO:0008830">
    <property type="term" value="F:dTDP-4-dehydrorhamnose 3,5-epimerase activity"/>
    <property type="evidence" value="ECO:0007669"/>
    <property type="project" value="UniProtKB-EC"/>
</dbReference>
<dbReference type="GO" id="GO:0019305">
    <property type="term" value="P:dTDP-rhamnose biosynthetic process"/>
    <property type="evidence" value="ECO:0007669"/>
    <property type="project" value="UniProtKB-UniPathway"/>
</dbReference>
<dbReference type="GO" id="GO:0000271">
    <property type="term" value="P:polysaccharide biosynthetic process"/>
    <property type="evidence" value="ECO:0007669"/>
    <property type="project" value="TreeGrafter"/>
</dbReference>
<dbReference type="CDD" id="cd00438">
    <property type="entry name" value="cupin_RmlC"/>
    <property type="match status" value="1"/>
</dbReference>
<dbReference type="Gene3D" id="2.60.120.10">
    <property type="entry name" value="Jelly Rolls"/>
    <property type="match status" value="1"/>
</dbReference>
<dbReference type="InterPro" id="IPR000888">
    <property type="entry name" value="RmlC-like"/>
</dbReference>
<dbReference type="InterPro" id="IPR014710">
    <property type="entry name" value="RmlC-like_jellyroll"/>
</dbReference>
<dbReference type="InterPro" id="IPR011051">
    <property type="entry name" value="RmlC_Cupin_sf"/>
</dbReference>
<dbReference type="NCBIfam" id="TIGR01221">
    <property type="entry name" value="rmlC"/>
    <property type="match status" value="1"/>
</dbReference>
<dbReference type="PANTHER" id="PTHR21047">
    <property type="entry name" value="DTDP-6-DEOXY-D-GLUCOSE-3,5 EPIMERASE"/>
    <property type="match status" value="1"/>
</dbReference>
<dbReference type="PANTHER" id="PTHR21047:SF2">
    <property type="entry name" value="THYMIDINE DIPHOSPHO-4-KETO-RHAMNOSE 3,5-EPIMERASE"/>
    <property type="match status" value="1"/>
</dbReference>
<dbReference type="Pfam" id="PF00908">
    <property type="entry name" value="dTDP_sugar_isom"/>
    <property type="match status" value="1"/>
</dbReference>
<dbReference type="SUPFAM" id="SSF51182">
    <property type="entry name" value="RmlC-like cupins"/>
    <property type="match status" value="1"/>
</dbReference>
<proteinExistence type="inferred from homology"/>
<keyword id="KW-0119">Carbohydrate metabolism</keyword>
<keyword id="KW-0413">Isomerase</keyword>
<keyword id="KW-0614">Plasmid</keyword>
<keyword id="KW-1185">Reference proteome</keyword>
<protein>
    <recommendedName>
        <fullName evidence="1">dTDP-4-dehydrorhamnose 3,5-epimerase</fullName>
        <ecNumber evidence="1">5.1.3.13</ecNumber>
    </recommendedName>
    <alternativeName>
        <fullName evidence="1">Thymidine diphospho-4-keto-rhamnose 3,5-epimerase</fullName>
    </alternativeName>
    <alternativeName>
        <fullName evidence="1">dTDP-4-keto-6-deoxyglucose 3,5-epimerase</fullName>
    </alternativeName>
    <alternativeName>
        <fullName evidence="1">dTDP-6-deoxy-D-xylo-4-hexulose 3,5-epimerase</fullName>
    </alternativeName>
    <alternativeName>
        <fullName evidence="1">dTDP-L-rhamnose synthase</fullName>
    </alternativeName>
</protein>
<accession>P55468</accession>
<gene>
    <name type="ordered locus">NGR_a03520</name>
    <name type="ORF">y4gL</name>
</gene>
<feature type="chain" id="PRO_0000207982" description="dTDP-4-dehydrorhamnose 3,5-epimerase">
    <location>
        <begin position="1"/>
        <end position="195"/>
    </location>
</feature>
<feature type="active site" description="Proton acceptor" evidence="3">
    <location>
        <position position="70"/>
    </location>
</feature>
<feature type="active site" description="Proton donor" evidence="3">
    <location>
        <position position="140"/>
    </location>
</feature>
<feature type="binding site" evidence="3">
    <location>
        <position position="31"/>
    </location>
    <ligand>
        <name>substrate</name>
    </ligand>
</feature>
<feature type="binding site" evidence="3">
    <location>
        <position position="36"/>
    </location>
    <ligand>
        <name>substrate</name>
    </ligand>
</feature>
<feature type="binding site" evidence="3">
    <location>
        <begin position="54"/>
        <end position="56"/>
    </location>
    <ligand>
        <name>substrate</name>
    </ligand>
</feature>
<feature type="binding site" evidence="3">
    <location>
        <position position="67"/>
    </location>
    <ligand>
        <name>substrate</name>
    </ligand>
</feature>
<feature type="binding site" evidence="3">
    <location>
        <position position="80"/>
    </location>
    <ligand>
        <name>substrate</name>
    </ligand>
</feature>
<feature type="binding site" evidence="3">
    <location>
        <position position="127"/>
    </location>
    <ligand>
        <name>substrate</name>
    </ligand>
</feature>
<feature type="binding site" evidence="3">
    <location>
        <position position="151"/>
    </location>
    <ligand>
        <name>substrate</name>
    </ligand>
</feature>
<feature type="binding site" evidence="3">
    <location>
        <position position="176"/>
    </location>
    <ligand>
        <name>substrate</name>
    </ligand>
</feature>
<feature type="site" description="Participates in a stacking interaction with the thymidine ring of dTDP-4-oxo-6-deoxyglucose" evidence="2">
    <location>
        <position position="146"/>
    </location>
</feature>
<sequence length="195" mass="21852">MGGTELDEMYFQSLSIAEVKLIRPRKFGDCRGYFSEVFREKWFRKNVADVGLVQDNESLSAQIGTVRGLHFQLEPFAQGKLVRCTRGALFDVAVDVRVGSPTYGKWVSAELSQENGAQLWVPAGFAHGFMTLKADTVISYKVTAPYSAEHDRGLKWDDPAIGINWPKMTTYVLSEKDSSQPSLCELPVSFQYVKV</sequence>
<geneLocation type="plasmid">
    <name>sym pNGR234a</name>
</geneLocation>